<accession>A9WH88</accession>
<feature type="chain" id="PRO_0000338798" description="Translation initiation factor IF-1">
    <location>
        <begin position="1"/>
        <end position="73"/>
    </location>
</feature>
<feature type="domain" description="S1-like" evidence="1">
    <location>
        <begin position="1"/>
        <end position="73"/>
    </location>
</feature>
<organism>
    <name type="scientific">Chloroflexus aurantiacus (strain ATCC 29366 / DSM 635 / J-10-fl)</name>
    <dbReference type="NCBI Taxonomy" id="324602"/>
    <lineage>
        <taxon>Bacteria</taxon>
        <taxon>Bacillati</taxon>
        <taxon>Chloroflexota</taxon>
        <taxon>Chloroflexia</taxon>
        <taxon>Chloroflexales</taxon>
        <taxon>Chloroflexineae</taxon>
        <taxon>Chloroflexaceae</taxon>
        <taxon>Chloroflexus</taxon>
    </lineage>
</organism>
<protein>
    <recommendedName>
        <fullName evidence="1">Translation initiation factor IF-1</fullName>
    </recommendedName>
</protein>
<name>IF1_CHLAA</name>
<dbReference type="EMBL" id="CP000909">
    <property type="protein sequence ID" value="ABY35600.1"/>
    <property type="molecule type" value="Genomic_DNA"/>
</dbReference>
<dbReference type="RefSeq" id="WP_012258253.1">
    <property type="nucleotide sequence ID" value="NC_010175.1"/>
</dbReference>
<dbReference type="RefSeq" id="YP_001635989.1">
    <property type="nucleotide sequence ID" value="NC_010175.1"/>
</dbReference>
<dbReference type="SMR" id="A9WH88"/>
<dbReference type="FunCoup" id="A9WH88">
    <property type="interactions" value="330"/>
</dbReference>
<dbReference type="STRING" id="324602.Caur_2391"/>
<dbReference type="EnsemblBacteria" id="ABY35600">
    <property type="protein sequence ID" value="ABY35600"/>
    <property type="gene ID" value="Caur_2391"/>
</dbReference>
<dbReference type="KEGG" id="cau:Caur_2391"/>
<dbReference type="PATRIC" id="fig|324602.8.peg.2705"/>
<dbReference type="eggNOG" id="COG0361">
    <property type="taxonomic scope" value="Bacteria"/>
</dbReference>
<dbReference type="HOGENOM" id="CLU_151267_1_0_0"/>
<dbReference type="InParanoid" id="A9WH88"/>
<dbReference type="Proteomes" id="UP000002008">
    <property type="component" value="Chromosome"/>
</dbReference>
<dbReference type="GO" id="GO:0005829">
    <property type="term" value="C:cytosol"/>
    <property type="evidence" value="ECO:0000318"/>
    <property type="project" value="GO_Central"/>
</dbReference>
<dbReference type="GO" id="GO:0043022">
    <property type="term" value="F:ribosome binding"/>
    <property type="evidence" value="ECO:0000318"/>
    <property type="project" value="GO_Central"/>
</dbReference>
<dbReference type="GO" id="GO:0019843">
    <property type="term" value="F:rRNA binding"/>
    <property type="evidence" value="ECO:0007669"/>
    <property type="project" value="UniProtKB-UniRule"/>
</dbReference>
<dbReference type="GO" id="GO:0003743">
    <property type="term" value="F:translation initiation factor activity"/>
    <property type="evidence" value="ECO:0007669"/>
    <property type="project" value="UniProtKB-UniRule"/>
</dbReference>
<dbReference type="CDD" id="cd04451">
    <property type="entry name" value="S1_IF1"/>
    <property type="match status" value="1"/>
</dbReference>
<dbReference type="FunFam" id="2.40.50.140:FF:000002">
    <property type="entry name" value="Translation initiation factor IF-1"/>
    <property type="match status" value="1"/>
</dbReference>
<dbReference type="Gene3D" id="2.40.50.140">
    <property type="entry name" value="Nucleic acid-binding proteins"/>
    <property type="match status" value="1"/>
</dbReference>
<dbReference type="HAMAP" id="MF_00075">
    <property type="entry name" value="IF_1"/>
    <property type="match status" value="1"/>
</dbReference>
<dbReference type="InterPro" id="IPR012340">
    <property type="entry name" value="NA-bd_OB-fold"/>
</dbReference>
<dbReference type="InterPro" id="IPR006196">
    <property type="entry name" value="RNA-binding_domain_S1_IF1"/>
</dbReference>
<dbReference type="InterPro" id="IPR003029">
    <property type="entry name" value="S1_domain"/>
</dbReference>
<dbReference type="InterPro" id="IPR004368">
    <property type="entry name" value="TIF_IF1"/>
</dbReference>
<dbReference type="NCBIfam" id="TIGR00008">
    <property type="entry name" value="infA"/>
    <property type="match status" value="1"/>
</dbReference>
<dbReference type="PANTHER" id="PTHR33370">
    <property type="entry name" value="TRANSLATION INITIATION FACTOR IF-1, CHLOROPLASTIC"/>
    <property type="match status" value="1"/>
</dbReference>
<dbReference type="PANTHER" id="PTHR33370:SF1">
    <property type="entry name" value="TRANSLATION INITIATION FACTOR IF-1, CHLOROPLASTIC"/>
    <property type="match status" value="1"/>
</dbReference>
<dbReference type="Pfam" id="PF01176">
    <property type="entry name" value="eIF-1a"/>
    <property type="match status" value="1"/>
</dbReference>
<dbReference type="SMART" id="SM00316">
    <property type="entry name" value="S1"/>
    <property type="match status" value="1"/>
</dbReference>
<dbReference type="SUPFAM" id="SSF50249">
    <property type="entry name" value="Nucleic acid-binding proteins"/>
    <property type="match status" value="1"/>
</dbReference>
<dbReference type="PROSITE" id="PS50832">
    <property type="entry name" value="S1_IF1_TYPE"/>
    <property type="match status" value="1"/>
</dbReference>
<proteinExistence type="inferred from homology"/>
<evidence type="ECO:0000255" key="1">
    <source>
        <dbReference type="HAMAP-Rule" id="MF_00075"/>
    </source>
</evidence>
<reference key="1">
    <citation type="journal article" date="2011" name="BMC Genomics">
        <title>Complete genome sequence of the filamentous anoxygenic phototrophic bacterium Chloroflexus aurantiacus.</title>
        <authorList>
            <person name="Tang K.H."/>
            <person name="Barry K."/>
            <person name="Chertkov O."/>
            <person name="Dalin E."/>
            <person name="Han C.S."/>
            <person name="Hauser L.J."/>
            <person name="Honchak B.M."/>
            <person name="Karbach L.E."/>
            <person name="Land M.L."/>
            <person name="Lapidus A."/>
            <person name="Larimer F.W."/>
            <person name="Mikhailova N."/>
            <person name="Pitluck S."/>
            <person name="Pierson B.K."/>
            <person name="Blankenship R.E."/>
        </authorList>
    </citation>
    <scope>NUCLEOTIDE SEQUENCE [LARGE SCALE GENOMIC DNA]</scope>
    <source>
        <strain>ATCC 29366 / DSM 635 / J-10-fl</strain>
    </source>
</reference>
<comment type="function">
    <text evidence="1">One of the essential components for the initiation of protein synthesis. Stabilizes the binding of IF-2 and IF-3 on the 30S subunit to which N-formylmethionyl-tRNA(fMet) subsequently binds. Helps modulate mRNA selection, yielding the 30S pre-initiation complex (PIC). Upon addition of the 50S ribosomal subunit IF-1, IF-2 and IF-3 are released leaving the mature 70S translation initiation complex.</text>
</comment>
<comment type="subunit">
    <text evidence="1">Component of the 30S ribosomal translation pre-initiation complex which assembles on the 30S ribosome in the order IF-2 and IF-3, IF-1 and N-formylmethionyl-tRNA(fMet); mRNA recruitment can occur at any time during PIC assembly.</text>
</comment>
<comment type="subcellular location">
    <subcellularLocation>
        <location evidence="1">Cytoplasm</location>
    </subcellularLocation>
</comment>
<comment type="similarity">
    <text evidence="1">Belongs to the IF-1 family.</text>
</comment>
<sequence>MSKKKDVIEMEGTITEPLPNAMFRVQLDNGHEVLAHISGKMRMNYIRILKGDRVLVELSPYDLTRGRITYRYK</sequence>
<gene>
    <name evidence="1" type="primary">infA</name>
    <name type="ordered locus">Caur_2391</name>
</gene>
<keyword id="KW-0963">Cytoplasm</keyword>
<keyword id="KW-0396">Initiation factor</keyword>
<keyword id="KW-0648">Protein biosynthesis</keyword>
<keyword id="KW-1185">Reference proteome</keyword>
<keyword id="KW-0694">RNA-binding</keyword>
<keyword id="KW-0699">rRNA-binding</keyword>